<comment type="function">
    <text evidence="1">Component of the cleavage factor I (CF I) involved in pre-mRNA 3'-end processing.</text>
</comment>
<comment type="subcellular location">
    <subcellularLocation>
        <location evidence="1">Nucleus</location>
    </subcellularLocation>
</comment>
<comment type="similarity">
    <text evidence="4">Belongs to the metallo-beta-lactamase superfamily. RNA-metabolizing metallo-beta-lactamase-like family. CPSF2/YSH1 subfamily.</text>
</comment>
<protein>
    <recommendedName>
        <fullName>Endoribonuclease YSH1</fullName>
        <ecNumber>3.1.27.-</ecNumber>
    </recommendedName>
    <alternativeName>
        <fullName>mRNA 3'-end-processing protein YSH1</fullName>
    </alternativeName>
</protein>
<evidence type="ECO:0000250" key="1"/>
<evidence type="ECO:0000255" key="2"/>
<evidence type="ECO:0000256" key="3">
    <source>
        <dbReference type="SAM" id="MobiDB-lite"/>
    </source>
</evidence>
<evidence type="ECO:0000305" key="4"/>
<accession>Q74ZC0</accession>
<dbReference type="EC" id="3.1.27.-"/>
<dbReference type="EMBL" id="AE016820">
    <property type="protein sequence ID" value="AAS54769.2"/>
    <property type="molecule type" value="Genomic_DNA"/>
</dbReference>
<dbReference type="RefSeq" id="NP_986945.2">
    <property type="nucleotide sequence ID" value="NM_212007.2"/>
</dbReference>
<dbReference type="SMR" id="Q74ZC0"/>
<dbReference type="FunCoup" id="Q74ZC0">
    <property type="interactions" value="1051"/>
</dbReference>
<dbReference type="STRING" id="284811.Q74ZC0"/>
<dbReference type="EnsemblFungi" id="AAS54769">
    <property type="protein sequence ID" value="AAS54769"/>
    <property type="gene ID" value="AGOS_AGR279C"/>
</dbReference>
<dbReference type="GeneID" id="4623247"/>
<dbReference type="KEGG" id="ago:AGOS_AGR279C"/>
<dbReference type="eggNOG" id="KOG1137">
    <property type="taxonomic scope" value="Eukaryota"/>
</dbReference>
<dbReference type="HOGENOM" id="CLU_009673_2_3_1"/>
<dbReference type="InParanoid" id="Q74ZC0"/>
<dbReference type="OMA" id="CKQHITL"/>
<dbReference type="OrthoDB" id="10249535at2759"/>
<dbReference type="Proteomes" id="UP000000591">
    <property type="component" value="Chromosome VII"/>
</dbReference>
<dbReference type="GO" id="GO:0005847">
    <property type="term" value="C:mRNA cleavage and polyadenylation specificity factor complex"/>
    <property type="evidence" value="ECO:0000318"/>
    <property type="project" value="GO_Central"/>
</dbReference>
<dbReference type="GO" id="GO:0004534">
    <property type="term" value="F:5'-3' RNA exonuclease activity"/>
    <property type="evidence" value="ECO:0000318"/>
    <property type="project" value="GO_Central"/>
</dbReference>
<dbReference type="GO" id="GO:0046872">
    <property type="term" value="F:metal ion binding"/>
    <property type="evidence" value="ECO:0007669"/>
    <property type="project" value="UniProtKB-KW"/>
</dbReference>
<dbReference type="GO" id="GO:0003723">
    <property type="term" value="F:RNA binding"/>
    <property type="evidence" value="ECO:0000318"/>
    <property type="project" value="GO_Central"/>
</dbReference>
<dbReference type="GO" id="GO:0004521">
    <property type="term" value="F:RNA endonuclease activity"/>
    <property type="evidence" value="ECO:0000318"/>
    <property type="project" value="GO_Central"/>
</dbReference>
<dbReference type="GO" id="GO:0006397">
    <property type="term" value="P:mRNA processing"/>
    <property type="evidence" value="ECO:0007669"/>
    <property type="project" value="UniProtKB-KW"/>
</dbReference>
<dbReference type="GO" id="GO:0031126">
    <property type="term" value="P:sno(s)RNA 3'-end processing"/>
    <property type="evidence" value="ECO:0007669"/>
    <property type="project" value="EnsemblFungi"/>
</dbReference>
<dbReference type="GO" id="GO:0034247">
    <property type="term" value="P:snoRNA splicing"/>
    <property type="evidence" value="ECO:0007669"/>
    <property type="project" value="EnsemblFungi"/>
</dbReference>
<dbReference type="GO" id="GO:0006369">
    <property type="term" value="P:termination of RNA polymerase II transcription"/>
    <property type="evidence" value="ECO:0007669"/>
    <property type="project" value="EnsemblFungi"/>
</dbReference>
<dbReference type="CDD" id="cd16292">
    <property type="entry name" value="CPSF3-like_MBL-fold"/>
    <property type="match status" value="1"/>
</dbReference>
<dbReference type="FunFam" id="3.60.15.10:FF:000001">
    <property type="entry name" value="Cleavage and polyadenylation specificity factor"/>
    <property type="match status" value="1"/>
</dbReference>
<dbReference type="FunFam" id="3.40.50.10890:FF:000001">
    <property type="entry name" value="Cleavage and polyadenylation specificity factor subunit 3"/>
    <property type="match status" value="1"/>
</dbReference>
<dbReference type="Gene3D" id="3.40.50.10890">
    <property type="match status" value="1"/>
</dbReference>
<dbReference type="Gene3D" id="3.60.15.10">
    <property type="entry name" value="Ribonuclease Z/Hydroxyacylglutathione hydrolase-like"/>
    <property type="match status" value="1"/>
</dbReference>
<dbReference type="InterPro" id="IPR022712">
    <property type="entry name" value="Beta_Casp"/>
</dbReference>
<dbReference type="InterPro" id="IPR021718">
    <property type="entry name" value="CPSF73-100_C"/>
</dbReference>
<dbReference type="InterPro" id="IPR050698">
    <property type="entry name" value="MBL"/>
</dbReference>
<dbReference type="InterPro" id="IPR001279">
    <property type="entry name" value="Metallo-B-lactamas"/>
</dbReference>
<dbReference type="InterPro" id="IPR036866">
    <property type="entry name" value="RibonucZ/Hydroxyglut_hydro"/>
</dbReference>
<dbReference type="InterPro" id="IPR011108">
    <property type="entry name" value="RMMBL"/>
</dbReference>
<dbReference type="PANTHER" id="PTHR11203">
    <property type="entry name" value="CLEAVAGE AND POLYADENYLATION SPECIFICITY FACTOR FAMILY MEMBER"/>
    <property type="match status" value="1"/>
</dbReference>
<dbReference type="PANTHER" id="PTHR11203:SF11">
    <property type="entry name" value="CLEAVAGE AND POLYADENYLATION SPECIFICITY FACTOR SUBUNIT 3"/>
    <property type="match status" value="1"/>
</dbReference>
<dbReference type="Pfam" id="PF10996">
    <property type="entry name" value="Beta-Casp"/>
    <property type="match status" value="1"/>
</dbReference>
<dbReference type="Pfam" id="PF11718">
    <property type="entry name" value="CPSF73-100_C"/>
    <property type="match status" value="1"/>
</dbReference>
<dbReference type="Pfam" id="PF16661">
    <property type="entry name" value="Lactamase_B_6"/>
    <property type="match status" value="1"/>
</dbReference>
<dbReference type="Pfam" id="PF07521">
    <property type="entry name" value="RMMBL"/>
    <property type="match status" value="1"/>
</dbReference>
<dbReference type="SMART" id="SM01027">
    <property type="entry name" value="Beta-Casp"/>
    <property type="match status" value="1"/>
</dbReference>
<dbReference type="SMART" id="SM01098">
    <property type="entry name" value="CPSF73-100_C"/>
    <property type="match status" value="1"/>
</dbReference>
<dbReference type="SMART" id="SM00849">
    <property type="entry name" value="Lactamase_B"/>
    <property type="match status" value="1"/>
</dbReference>
<dbReference type="SUPFAM" id="SSF56281">
    <property type="entry name" value="Metallo-hydrolase/oxidoreductase"/>
    <property type="match status" value="1"/>
</dbReference>
<feature type="chain" id="PRO_0000238896" description="Endoribonuclease YSH1">
    <location>
        <begin position="1"/>
        <end position="771"/>
    </location>
</feature>
<feature type="region of interest" description="Disordered" evidence="3">
    <location>
        <begin position="493"/>
        <end position="533"/>
    </location>
</feature>
<feature type="compositionally biased region" description="Basic and acidic residues" evidence="3">
    <location>
        <begin position="511"/>
        <end position="530"/>
    </location>
</feature>
<feature type="active site" description="Proton donor" evidence="2">
    <location>
        <position position="409"/>
    </location>
</feature>
<feature type="binding site" evidence="1">
    <location>
        <position position="70"/>
    </location>
    <ligand>
        <name>Zn(2+)</name>
        <dbReference type="ChEBI" id="CHEBI:29105"/>
        <label>1</label>
    </ligand>
</feature>
<feature type="binding site" evidence="1">
    <location>
        <position position="72"/>
    </location>
    <ligand>
        <name>Zn(2+)</name>
        <dbReference type="ChEBI" id="CHEBI:29105"/>
        <label>1</label>
    </ligand>
</feature>
<feature type="binding site" evidence="1">
    <location>
        <position position="74"/>
    </location>
    <ligand>
        <name>Zn(2+)</name>
        <dbReference type="ChEBI" id="CHEBI:29105"/>
        <label>2</label>
    </ligand>
</feature>
<feature type="binding site" evidence="1">
    <location>
        <position position="75"/>
    </location>
    <ligand>
        <name>Zn(2+)</name>
        <dbReference type="ChEBI" id="CHEBI:29105"/>
        <label>2</label>
    </ligand>
</feature>
<feature type="binding site" evidence="1">
    <location>
        <position position="164"/>
    </location>
    <ligand>
        <name>Zn(2+)</name>
        <dbReference type="ChEBI" id="CHEBI:29105"/>
        <label>1</label>
    </ligand>
</feature>
<feature type="binding site" evidence="1">
    <location>
        <position position="185"/>
    </location>
    <ligand>
        <name>Zn(2+)</name>
        <dbReference type="ChEBI" id="CHEBI:29105"/>
        <label>1</label>
    </ligand>
</feature>
<feature type="binding site" evidence="1">
    <location>
        <position position="185"/>
    </location>
    <ligand>
        <name>Zn(2+)</name>
        <dbReference type="ChEBI" id="CHEBI:29105"/>
        <label>2</label>
    </ligand>
</feature>
<feature type="binding site" evidence="1">
    <location>
        <position position="431"/>
    </location>
    <ligand>
        <name>Zn(2+)</name>
        <dbReference type="ChEBI" id="CHEBI:29105"/>
        <label>2</label>
    </ligand>
</feature>
<sequence>MTEEKLDTNSFRFFGLGGSNEVGRSCHILQYKGKTVMLDAGVHPAHQGIASLPFYDEFDLSQVEVLLISHFHLDHAASLPYVMQRTNFQGRVFMTHPTKAIYRWLLSDFVKVTNIGNDNAGGVSDENLYTDEDLAESFDRIETVDYHSTIDVNGIKFTAYHAGHVLGAAMFQVEIAGLRILFTGDYSRELDRHLNSAEIPTLPSDILIVESTFGTATHEPRTSKEKKLTQLIHTTVSKGGRVLLPVFALGRAQEIMLILDEYWSQHAEQLGNGQVPIFYASNLARKCMSVFQTYVNMMNDKIRKKFRDSQTNPFIFKNISYLKNLDEFQDFGPSVMLASPGMLQNGLSRDLLEKWCPDEKNLVLITGYSVEGTMAKFLMLEPETIPSINNSDVSIPRRCQVEEISFAAHVDFRENLEFVEKIGAPNIILVHGESNPMGRLKSALLSNFSSLKGTEDEVRVYNPRNCVAVDLEFKGVKIAKAVGNIVDEMLPVVDEDKERPYNDPEDATSEEQPKEEPQDADKLPEEREQPEVEEERVISGILVSDEKNFDLNLVSLSDLREHHTDLSTTVLKERQTVHVDCRNELIFWHLCQMFGDIEVLVDEEGATLTKVEEDEKNTKPGQLVVRVMGDIKLSVVDHVATLEWTQNVISDAVADSIVAILLSVDSSPASVKRSSHSCNSNDHPGESETLWKIKQIAKLFNEQFGDSFTLLLDKESEHSDNENIKGSVTIGKNYATVNFSKMAVEDCNSNPLKGRIESILGIGADLVAPLC</sequence>
<name>YSH1_EREGS</name>
<organism>
    <name type="scientific">Eremothecium gossypii (strain ATCC 10895 / CBS 109.51 / FGSC 9923 / NRRL Y-1056)</name>
    <name type="common">Yeast</name>
    <name type="synonym">Ashbya gossypii</name>
    <dbReference type="NCBI Taxonomy" id="284811"/>
    <lineage>
        <taxon>Eukaryota</taxon>
        <taxon>Fungi</taxon>
        <taxon>Dikarya</taxon>
        <taxon>Ascomycota</taxon>
        <taxon>Saccharomycotina</taxon>
        <taxon>Saccharomycetes</taxon>
        <taxon>Saccharomycetales</taxon>
        <taxon>Saccharomycetaceae</taxon>
        <taxon>Eremothecium</taxon>
    </lineage>
</organism>
<gene>
    <name type="primary">YSH1</name>
    <name type="ordered locus">AGR279C</name>
</gene>
<proteinExistence type="inferred from homology"/>
<reference key="1">
    <citation type="journal article" date="2004" name="Science">
        <title>The Ashbya gossypii genome as a tool for mapping the ancient Saccharomyces cerevisiae genome.</title>
        <authorList>
            <person name="Dietrich F.S."/>
            <person name="Voegeli S."/>
            <person name="Brachat S."/>
            <person name="Lerch A."/>
            <person name="Gates K."/>
            <person name="Steiner S."/>
            <person name="Mohr C."/>
            <person name="Poehlmann R."/>
            <person name="Luedi P."/>
            <person name="Choi S."/>
            <person name="Wing R.A."/>
            <person name="Flavier A."/>
            <person name="Gaffney T.D."/>
            <person name="Philippsen P."/>
        </authorList>
    </citation>
    <scope>NUCLEOTIDE SEQUENCE [LARGE SCALE GENOMIC DNA]</scope>
    <source>
        <strain>ATCC 10895 / CBS 109.51 / FGSC 9923 / NRRL Y-1056</strain>
    </source>
</reference>
<reference key="2">
    <citation type="journal article" date="2013" name="G3 (Bethesda)">
        <title>Genomes of Ashbya fungi isolated from insects reveal four mating-type loci, numerous translocations, lack of transposons, and distinct gene duplications.</title>
        <authorList>
            <person name="Dietrich F.S."/>
            <person name="Voegeli S."/>
            <person name="Kuo S."/>
            <person name="Philippsen P."/>
        </authorList>
    </citation>
    <scope>GENOME REANNOTATION</scope>
    <scope>SEQUENCE REVISION TO 82</scope>
    <source>
        <strain>ATCC 10895 / CBS 109.51 / FGSC 9923 / NRRL Y-1056</strain>
    </source>
</reference>
<keyword id="KW-0255">Endonuclease</keyword>
<keyword id="KW-0378">Hydrolase</keyword>
<keyword id="KW-0479">Metal-binding</keyword>
<keyword id="KW-0507">mRNA processing</keyword>
<keyword id="KW-0540">Nuclease</keyword>
<keyword id="KW-0539">Nucleus</keyword>
<keyword id="KW-1185">Reference proteome</keyword>
<keyword id="KW-0862">Zinc</keyword>